<organism>
    <name type="scientific">Rhodococcus erythropolis (strain PR4 / NBRC 100887)</name>
    <dbReference type="NCBI Taxonomy" id="234621"/>
    <lineage>
        <taxon>Bacteria</taxon>
        <taxon>Bacillati</taxon>
        <taxon>Actinomycetota</taxon>
        <taxon>Actinomycetes</taxon>
        <taxon>Mycobacteriales</taxon>
        <taxon>Nocardiaceae</taxon>
        <taxon>Rhodococcus</taxon>
        <taxon>Rhodococcus erythropolis group</taxon>
    </lineage>
</organism>
<sequence>MIQQESRVRVADNTGAKEILCIRVLGGSSRRYAGIGDVIVATVKDAIPGGNIKKGEVVKAVIVRTTKERRRPDGSYIKFDENAAVLIKADSDPRGTRIFGPVGRELREKKFMKIVSLAPEVL</sequence>
<proteinExistence type="inferred from homology"/>
<name>RL14_RHOE4</name>
<comment type="function">
    <text evidence="1">Binds to 23S rRNA. Forms part of two intersubunit bridges in the 70S ribosome.</text>
</comment>
<comment type="subunit">
    <text evidence="1">Part of the 50S ribosomal subunit. Forms a cluster with proteins L3 and L19. In the 70S ribosome, L14 and L19 interact and together make contacts with the 16S rRNA in bridges B5 and B8.</text>
</comment>
<comment type="similarity">
    <text evidence="1">Belongs to the universal ribosomal protein uL14 family.</text>
</comment>
<feature type="chain" id="PRO_1000214989" description="Large ribosomal subunit protein uL14">
    <location>
        <begin position="1"/>
        <end position="122"/>
    </location>
</feature>
<keyword id="KW-0687">Ribonucleoprotein</keyword>
<keyword id="KW-0689">Ribosomal protein</keyword>
<keyword id="KW-0694">RNA-binding</keyword>
<keyword id="KW-0699">rRNA-binding</keyword>
<gene>
    <name evidence="1" type="primary">rplN</name>
    <name type="ordered locus">RER_18620</name>
</gene>
<protein>
    <recommendedName>
        <fullName evidence="1">Large ribosomal subunit protein uL14</fullName>
    </recommendedName>
    <alternativeName>
        <fullName evidence="2">50S ribosomal protein L14</fullName>
    </alternativeName>
</protein>
<reference key="1">
    <citation type="submission" date="2005-03" db="EMBL/GenBank/DDBJ databases">
        <title>Comparison of the complete genome sequences of Rhodococcus erythropolis PR4 and Rhodococcus opacus B4.</title>
        <authorList>
            <person name="Takarada H."/>
            <person name="Sekine M."/>
            <person name="Hosoyama A."/>
            <person name="Yamada R."/>
            <person name="Fujisawa T."/>
            <person name="Omata S."/>
            <person name="Shimizu A."/>
            <person name="Tsukatani N."/>
            <person name="Tanikawa S."/>
            <person name="Fujita N."/>
            <person name="Harayama S."/>
        </authorList>
    </citation>
    <scope>NUCLEOTIDE SEQUENCE [LARGE SCALE GENOMIC DNA]</scope>
    <source>
        <strain>PR4 / NBRC 100887</strain>
    </source>
</reference>
<dbReference type="EMBL" id="AP008957">
    <property type="protein sequence ID" value="BAH32570.1"/>
    <property type="molecule type" value="Genomic_DNA"/>
</dbReference>
<dbReference type="RefSeq" id="WP_003940951.1">
    <property type="nucleotide sequence ID" value="NC_012490.1"/>
</dbReference>
<dbReference type="SMR" id="C0ZW35"/>
<dbReference type="GeneID" id="93803294"/>
<dbReference type="KEGG" id="rer:RER_18620"/>
<dbReference type="eggNOG" id="COG0093">
    <property type="taxonomic scope" value="Bacteria"/>
</dbReference>
<dbReference type="HOGENOM" id="CLU_095071_2_1_11"/>
<dbReference type="Proteomes" id="UP000002204">
    <property type="component" value="Chromosome"/>
</dbReference>
<dbReference type="GO" id="GO:0022625">
    <property type="term" value="C:cytosolic large ribosomal subunit"/>
    <property type="evidence" value="ECO:0007669"/>
    <property type="project" value="TreeGrafter"/>
</dbReference>
<dbReference type="GO" id="GO:0070180">
    <property type="term" value="F:large ribosomal subunit rRNA binding"/>
    <property type="evidence" value="ECO:0007669"/>
    <property type="project" value="TreeGrafter"/>
</dbReference>
<dbReference type="GO" id="GO:0003735">
    <property type="term" value="F:structural constituent of ribosome"/>
    <property type="evidence" value="ECO:0007669"/>
    <property type="project" value="InterPro"/>
</dbReference>
<dbReference type="GO" id="GO:0006412">
    <property type="term" value="P:translation"/>
    <property type="evidence" value="ECO:0007669"/>
    <property type="project" value="UniProtKB-UniRule"/>
</dbReference>
<dbReference type="CDD" id="cd00337">
    <property type="entry name" value="Ribosomal_uL14"/>
    <property type="match status" value="1"/>
</dbReference>
<dbReference type="FunFam" id="2.40.150.20:FF:000001">
    <property type="entry name" value="50S ribosomal protein L14"/>
    <property type="match status" value="1"/>
</dbReference>
<dbReference type="Gene3D" id="2.40.150.20">
    <property type="entry name" value="Ribosomal protein L14"/>
    <property type="match status" value="1"/>
</dbReference>
<dbReference type="HAMAP" id="MF_01367">
    <property type="entry name" value="Ribosomal_uL14"/>
    <property type="match status" value="1"/>
</dbReference>
<dbReference type="InterPro" id="IPR000218">
    <property type="entry name" value="Ribosomal_uL14"/>
</dbReference>
<dbReference type="InterPro" id="IPR005745">
    <property type="entry name" value="Ribosomal_uL14_bac-type"/>
</dbReference>
<dbReference type="InterPro" id="IPR019972">
    <property type="entry name" value="Ribosomal_uL14_CS"/>
</dbReference>
<dbReference type="InterPro" id="IPR036853">
    <property type="entry name" value="Ribosomal_uL14_sf"/>
</dbReference>
<dbReference type="NCBIfam" id="TIGR01067">
    <property type="entry name" value="rplN_bact"/>
    <property type="match status" value="1"/>
</dbReference>
<dbReference type="PANTHER" id="PTHR11761">
    <property type="entry name" value="50S/60S RIBOSOMAL PROTEIN L14/L23"/>
    <property type="match status" value="1"/>
</dbReference>
<dbReference type="PANTHER" id="PTHR11761:SF3">
    <property type="entry name" value="LARGE RIBOSOMAL SUBUNIT PROTEIN UL14M"/>
    <property type="match status" value="1"/>
</dbReference>
<dbReference type="Pfam" id="PF00238">
    <property type="entry name" value="Ribosomal_L14"/>
    <property type="match status" value="1"/>
</dbReference>
<dbReference type="SMART" id="SM01374">
    <property type="entry name" value="Ribosomal_L14"/>
    <property type="match status" value="1"/>
</dbReference>
<dbReference type="SUPFAM" id="SSF50193">
    <property type="entry name" value="Ribosomal protein L14"/>
    <property type="match status" value="1"/>
</dbReference>
<dbReference type="PROSITE" id="PS00049">
    <property type="entry name" value="RIBOSOMAL_L14"/>
    <property type="match status" value="1"/>
</dbReference>
<accession>C0ZW35</accession>
<evidence type="ECO:0000255" key="1">
    <source>
        <dbReference type="HAMAP-Rule" id="MF_01367"/>
    </source>
</evidence>
<evidence type="ECO:0000305" key="2"/>